<protein>
    <recommendedName>
        <fullName evidence="1">Formate--tetrahydrofolate ligase</fullName>
        <ecNumber evidence="1">6.3.4.3</ecNumber>
    </recommendedName>
    <alternativeName>
        <fullName evidence="1">Formyltetrahydrofolate synthetase</fullName>
        <shortName evidence="1">FHS</shortName>
        <shortName evidence="1">FTHFS</shortName>
    </alternativeName>
</protein>
<evidence type="ECO:0000255" key="1">
    <source>
        <dbReference type="HAMAP-Rule" id="MF_01543"/>
    </source>
</evidence>
<sequence>MKPIKEIADQLGLKDDVLYPYGHYIAKIDHRFLKSLENREDGKLILVTAVTPTPAGEGKTTTSIGLSMSLNRIGKKSIVTLREPSLGPTLGLKGGATGGGRSRVLPSDEINLHFTGDMHAVASAHNLLAAVLDSHIKHGNELKIDITRVFWKRTMDMNDRALRSIVIGLGGSANGFPREDSFIITAASEVMAVLALSENMKDLKERLGKIIVALNTDRKIVRVSDLGIQGAMAVLLKDAINPNLVQTTEGTPALIHCGPFANIAHGTNSIIATKMAMKLSEYTVTEAGFGADLGAEKFIDFVSRVGGFYPNAAVLVATVRALKYHGGADLKNIHEENLEALKEGFKNLRVHLENLRKFNLPVVVALNRFITDTEKEIAYVVKECEKLGVRVAVSEVFEKGSEGGVELAKAVTEAVKDVKPVYLYEMNDPVEKKIEILAKEIYRAGRVEFSDTAKNALKFIKKHGFDELPVIVAKTPKSISHDPSLRGAPEGYTFVVSDLFVSAGAGFVVALSGDINLMPGLPERPNALNMDVDDSGNIVGVS</sequence>
<organism>
    <name type="scientific">Thermotoga petrophila (strain ATCC BAA-488 / DSM 13995 / JCM 10881 / RKU-1)</name>
    <dbReference type="NCBI Taxonomy" id="390874"/>
    <lineage>
        <taxon>Bacteria</taxon>
        <taxon>Thermotogati</taxon>
        <taxon>Thermotogota</taxon>
        <taxon>Thermotogae</taxon>
        <taxon>Thermotogales</taxon>
        <taxon>Thermotogaceae</taxon>
        <taxon>Thermotoga</taxon>
    </lineage>
</organism>
<feature type="chain" id="PRO_1000068799" description="Formate--tetrahydrofolate ligase">
    <location>
        <begin position="1"/>
        <end position="542"/>
    </location>
</feature>
<feature type="binding site" evidence="1">
    <location>
        <begin position="53"/>
        <end position="60"/>
    </location>
    <ligand>
        <name>ATP</name>
        <dbReference type="ChEBI" id="CHEBI:30616"/>
    </ligand>
</feature>
<accession>A5ILJ8</accession>
<comment type="catalytic activity">
    <reaction evidence="1">
        <text>(6S)-5,6,7,8-tetrahydrofolate + formate + ATP = (6R)-10-formyltetrahydrofolate + ADP + phosphate</text>
        <dbReference type="Rhea" id="RHEA:20221"/>
        <dbReference type="ChEBI" id="CHEBI:15740"/>
        <dbReference type="ChEBI" id="CHEBI:30616"/>
        <dbReference type="ChEBI" id="CHEBI:43474"/>
        <dbReference type="ChEBI" id="CHEBI:57453"/>
        <dbReference type="ChEBI" id="CHEBI:195366"/>
        <dbReference type="ChEBI" id="CHEBI:456216"/>
        <dbReference type="EC" id="6.3.4.3"/>
    </reaction>
</comment>
<comment type="pathway">
    <text evidence="1">One-carbon metabolism; tetrahydrofolate interconversion.</text>
</comment>
<comment type="similarity">
    <text evidence="1">Belongs to the formate--tetrahydrofolate ligase family.</text>
</comment>
<dbReference type="EC" id="6.3.4.3" evidence="1"/>
<dbReference type="EMBL" id="CP000702">
    <property type="protein sequence ID" value="ABQ47071.1"/>
    <property type="molecule type" value="Genomic_DNA"/>
</dbReference>
<dbReference type="RefSeq" id="WP_011943601.1">
    <property type="nucleotide sequence ID" value="NC_009486.1"/>
</dbReference>
<dbReference type="SMR" id="A5ILJ8"/>
<dbReference type="STRING" id="390874.Tpet_1054"/>
<dbReference type="KEGG" id="tpt:Tpet_1054"/>
<dbReference type="eggNOG" id="COG2759">
    <property type="taxonomic scope" value="Bacteria"/>
</dbReference>
<dbReference type="HOGENOM" id="CLU_003601_3_3_0"/>
<dbReference type="UniPathway" id="UPA00193"/>
<dbReference type="Proteomes" id="UP000006558">
    <property type="component" value="Chromosome"/>
</dbReference>
<dbReference type="GO" id="GO:0005524">
    <property type="term" value="F:ATP binding"/>
    <property type="evidence" value="ECO:0007669"/>
    <property type="project" value="UniProtKB-UniRule"/>
</dbReference>
<dbReference type="GO" id="GO:0004329">
    <property type="term" value="F:formate-tetrahydrofolate ligase activity"/>
    <property type="evidence" value="ECO:0007669"/>
    <property type="project" value="UniProtKB-UniRule"/>
</dbReference>
<dbReference type="GO" id="GO:0035999">
    <property type="term" value="P:tetrahydrofolate interconversion"/>
    <property type="evidence" value="ECO:0007669"/>
    <property type="project" value="UniProtKB-UniRule"/>
</dbReference>
<dbReference type="CDD" id="cd00477">
    <property type="entry name" value="FTHFS"/>
    <property type="match status" value="1"/>
</dbReference>
<dbReference type="FunFam" id="3.30.1510.10:FF:000001">
    <property type="entry name" value="Formate--tetrahydrofolate ligase"/>
    <property type="match status" value="1"/>
</dbReference>
<dbReference type="FunFam" id="3.10.410.10:FF:000001">
    <property type="entry name" value="Putative formate--tetrahydrofolate ligase"/>
    <property type="match status" value="1"/>
</dbReference>
<dbReference type="Gene3D" id="3.30.1510.10">
    <property type="entry name" value="Domain 2, N(10)-formyltetrahydrofolate synthetase"/>
    <property type="match status" value="1"/>
</dbReference>
<dbReference type="Gene3D" id="3.10.410.10">
    <property type="entry name" value="Formyltetrahydrofolate synthetase, domain 3"/>
    <property type="match status" value="1"/>
</dbReference>
<dbReference type="Gene3D" id="3.40.50.300">
    <property type="entry name" value="P-loop containing nucleotide triphosphate hydrolases"/>
    <property type="match status" value="1"/>
</dbReference>
<dbReference type="HAMAP" id="MF_01543">
    <property type="entry name" value="FTHFS"/>
    <property type="match status" value="1"/>
</dbReference>
<dbReference type="InterPro" id="IPR000559">
    <property type="entry name" value="Formate_THF_ligase"/>
</dbReference>
<dbReference type="InterPro" id="IPR020628">
    <property type="entry name" value="Formate_THF_ligase_CS"/>
</dbReference>
<dbReference type="InterPro" id="IPR027417">
    <property type="entry name" value="P-loop_NTPase"/>
</dbReference>
<dbReference type="NCBIfam" id="NF010030">
    <property type="entry name" value="PRK13505.1"/>
    <property type="match status" value="1"/>
</dbReference>
<dbReference type="Pfam" id="PF01268">
    <property type="entry name" value="FTHFS"/>
    <property type="match status" value="1"/>
</dbReference>
<dbReference type="SUPFAM" id="SSF52540">
    <property type="entry name" value="P-loop containing nucleoside triphosphate hydrolases"/>
    <property type="match status" value="1"/>
</dbReference>
<dbReference type="PROSITE" id="PS00721">
    <property type="entry name" value="FTHFS_1"/>
    <property type="match status" value="1"/>
</dbReference>
<dbReference type="PROSITE" id="PS00722">
    <property type="entry name" value="FTHFS_2"/>
    <property type="match status" value="1"/>
</dbReference>
<reference key="1">
    <citation type="submission" date="2007-05" db="EMBL/GenBank/DDBJ databases">
        <title>Complete sequence of Thermotoga petrophila RKU-1.</title>
        <authorList>
            <consortium name="US DOE Joint Genome Institute"/>
            <person name="Copeland A."/>
            <person name="Lucas S."/>
            <person name="Lapidus A."/>
            <person name="Barry K."/>
            <person name="Glavina del Rio T."/>
            <person name="Dalin E."/>
            <person name="Tice H."/>
            <person name="Pitluck S."/>
            <person name="Sims D."/>
            <person name="Brettin T."/>
            <person name="Bruce D."/>
            <person name="Detter J.C."/>
            <person name="Han C."/>
            <person name="Tapia R."/>
            <person name="Schmutz J."/>
            <person name="Larimer F."/>
            <person name="Land M."/>
            <person name="Hauser L."/>
            <person name="Kyrpides N."/>
            <person name="Mikhailova N."/>
            <person name="Nelson K."/>
            <person name="Gogarten J.P."/>
            <person name="Noll K."/>
            <person name="Richardson P."/>
        </authorList>
    </citation>
    <scope>NUCLEOTIDE SEQUENCE [LARGE SCALE GENOMIC DNA]</scope>
    <source>
        <strain>ATCC BAA-488 / DSM 13995 / JCM 10881 / RKU-1</strain>
    </source>
</reference>
<proteinExistence type="inferred from homology"/>
<name>FTHS_THEP1</name>
<keyword id="KW-0067">ATP-binding</keyword>
<keyword id="KW-0436">Ligase</keyword>
<keyword id="KW-0547">Nucleotide-binding</keyword>
<keyword id="KW-0554">One-carbon metabolism</keyword>
<gene>
    <name evidence="1" type="primary">fhs</name>
    <name type="ordered locus">Tpet_1054</name>
</gene>